<dbReference type="EMBL" id="AF188488">
    <property type="protein sequence ID" value="AAG29057.1"/>
    <property type="status" value="ALT_INIT"/>
    <property type="molecule type" value="mRNA"/>
</dbReference>
<dbReference type="RefSeq" id="NP_001266554.1">
    <property type="nucleotide sequence ID" value="NM_001279625.1"/>
</dbReference>
<dbReference type="SMR" id="Q9GLP6"/>
<dbReference type="STRING" id="9593.ENSGGOP00000000194"/>
<dbReference type="MEROPS" id="I04.953"/>
<dbReference type="GlyCosmos" id="Q9GLP6">
    <property type="glycosylation" value="4 sites, No reported glycans"/>
</dbReference>
<dbReference type="GeneID" id="101141078"/>
<dbReference type="KEGG" id="ggo:101141078"/>
<dbReference type="CTD" id="183"/>
<dbReference type="eggNOG" id="KOG2392">
    <property type="taxonomic scope" value="Eukaryota"/>
</dbReference>
<dbReference type="InParanoid" id="Q9GLP6"/>
<dbReference type="OrthoDB" id="5020at9604"/>
<dbReference type="Proteomes" id="UP000001519">
    <property type="component" value="Unplaced"/>
</dbReference>
<dbReference type="GO" id="GO:0005615">
    <property type="term" value="C:extracellular space"/>
    <property type="evidence" value="ECO:0000318"/>
    <property type="project" value="GO_Central"/>
</dbReference>
<dbReference type="GO" id="GO:0004867">
    <property type="term" value="F:serine-type endopeptidase inhibitor activity"/>
    <property type="evidence" value="ECO:0000318"/>
    <property type="project" value="GO_Central"/>
</dbReference>
<dbReference type="GO" id="GO:0010718">
    <property type="term" value="P:positive regulation of epithelial to mesenchymal transition"/>
    <property type="evidence" value="ECO:0000250"/>
    <property type="project" value="UniProtKB"/>
</dbReference>
<dbReference type="GO" id="GO:0042981">
    <property type="term" value="P:regulation of apoptotic process"/>
    <property type="evidence" value="ECO:0000318"/>
    <property type="project" value="GO_Central"/>
</dbReference>
<dbReference type="GO" id="GO:0003081">
    <property type="term" value="P:regulation of systemic arterial blood pressure by renin-angiotensin"/>
    <property type="evidence" value="ECO:0007669"/>
    <property type="project" value="InterPro"/>
</dbReference>
<dbReference type="GO" id="GO:1990776">
    <property type="term" value="P:response to angiotensin"/>
    <property type="evidence" value="ECO:0000318"/>
    <property type="project" value="GO_Central"/>
</dbReference>
<dbReference type="GO" id="GO:0042310">
    <property type="term" value="P:vasoconstriction"/>
    <property type="evidence" value="ECO:0007669"/>
    <property type="project" value="UniProtKB-KW"/>
</dbReference>
<dbReference type="CDD" id="cd02054">
    <property type="entry name" value="serpinA8_AGT"/>
    <property type="match status" value="1"/>
</dbReference>
<dbReference type="FunFam" id="2.30.39.10:FF:000018">
    <property type="entry name" value="Angiotensinogen"/>
    <property type="match status" value="1"/>
</dbReference>
<dbReference type="Gene3D" id="2.30.39.10">
    <property type="entry name" value="Alpha-1-antitrypsin, domain 1"/>
    <property type="match status" value="1"/>
</dbReference>
<dbReference type="Gene3D" id="3.30.497.10">
    <property type="entry name" value="Antithrombin, subunit I, domain 2"/>
    <property type="match status" value="1"/>
</dbReference>
<dbReference type="InterPro" id="IPR000227">
    <property type="entry name" value="Angiotensinogen"/>
</dbReference>
<dbReference type="InterPro" id="IPR033834">
    <property type="entry name" value="Angiotensinogen_serpin_dom"/>
</dbReference>
<dbReference type="InterPro" id="IPR023795">
    <property type="entry name" value="Serpin_CS"/>
</dbReference>
<dbReference type="InterPro" id="IPR023796">
    <property type="entry name" value="Serpin_dom"/>
</dbReference>
<dbReference type="InterPro" id="IPR000215">
    <property type="entry name" value="Serpin_fam"/>
</dbReference>
<dbReference type="InterPro" id="IPR036186">
    <property type="entry name" value="Serpin_sf"/>
</dbReference>
<dbReference type="InterPro" id="IPR042178">
    <property type="entry name" value="Serpin_sf_1"/>
</dbReference>
<dbReference type="InterPro" id="IPR042185">
    <property type="entry name" value="Serpin_sf_2"/>
</dbReference>
<dbReference type="PANTHER" id="PTHR11461:SF13">
    <property type="entry name" value="ANGIOTENSINOGEN"/>
    <property type="match status" value="1"/>
</dbReference>
<dbReference type="PANTHER" id="PTHR11461">
    <property type="entry name" value="SERINE PROTEASE INHIBITOR, SERPIN"/>
    <property type="match status" value="1"/>
</dbReference>
<dbReference type="Pfam" id="PF00079">
    <property type="entry name" value="Serpin"/>
    <property type="match status" value="1"/>
</dbReference>
<dbReference type="PRINTS" id="PR00654">
    <property type="entry name" value="ANGIOTENSNGN"/>
</dbReference>
<dbReference type="SMART" id="SM00093">
    <property type="entry name" value="SERPIN"/>
    <property type="match status" value="1"/>
</dbReference>
<dbReference type="SUPFAM" id="SSF56574">
    <property type="entry name" value="Serpins"/>
    <property type="match status" value="1"/>
</dbReference>
<dbReference type="PROSITE" id="PS00284">
    <property type="entry name" value="SERPIN"/>
    <property type="match status" value="1"/>
</dbReference>
<name>ANGT_GORGO</name>
<sequence>MAPAGMSLRATILCLLAWAGLAAGDRVYIHPFHLVIHNESTCEQLAKANAGKPKDPTFIPAPIQAKTSPVDEKALQDQLVLVAAKLDTEDKLRAAMVGMLANFLGFRIYGMHSELWGVVHGATVLSPTAVFGTLASLYLGALDHTADRLQAILGVPWKDKNCTSRLDAHKVLSALQAVQGLLVAQGRADSQAQLLLSTVVGVFTAPSLHLKQPFVQGLALYTPVVLPRSLDFTELDVAAEKIDRFMQAVTGWKTGCSLTGASVDSTLAFNTYVHFQGKMKGFSLLAEPQEFWVDNSTSVSVPMLSGMGTFQHWSDIQDNFSVTQVPFTESACLLLIQPHYASDLDKVEGLTFQQNSLNWMKKLSPRTIHLTMPQLVLQGSYDLQDLLAQAELPAILHTELNLQKLSNDRIRVGEVLNSIFFELEADEREPTESTQQLNKPEVLEVTLNRPFLFAVYDQSATALHFLGRVANPLSTA</sequence>
<reference key="1">
    <citation type="submission" date="1999-09" db="EMBL/GenBank/DDBJ databases">
        <title>Germline mutations in the angiotensinogen gene cause predisposition to type 1 diabetes mellitus.</title>
        <authorList>
            <person name="Shattuck-Eidens D."/>
            <person name="McGrail M."/>
            <person name="Stone S."/>
        </authorList>
    </citation>
    <scope>NUCLEOTIDE SEQUENCE [MRNA]</scope>
</reference>
<organism>
    <name type="scientific">Gorilla gorilla gorilla</name>
    <name type="common">Western lowland gorilla</name>
    <dbReference type="NCBI Taxonomy" id="9595"/>
    <lineage>
        <taxon>Eukaryota</taxon>
        <taxon>Metazoa</taxon>
        <taxon>Chordata</taxon>
        <taxon>Craniata</taxon>
        <taxon>Vertebrata</taxon>
        <taxon>Euteleostomi</taxon>
        <taxon>Mammalia</taxon>
        <taxon>Eutheria</taxon>
        <taxon>Euarchontoglires</taxon>
        <taxon>Primates</taxon>
        <taxon>Haplorrhini</taxon>
        <taxon>Catarrhini</taxon>
        <taxon>Hominidae</taxon>
        <taxon>Gorilla</taxon>
    </lineage>
</organism>
<gene>
    <name type="primary">AGT</name>
    <name type="synonym">SERPINA8</name>
</gene>
<protein>
    <recommendedName>
        <fullName>Angiotensinogen</fullName>
    </recommendedName>
    <alternativeName>
        <fullName>Serpin A8</fullName>
    </alternativeName>
    <component>
        <recommendedName>
            <fullName>Angiotensin-1</fullName>
        </recommendedName>
        <alternativeName>
            <fullName>Angiotensin 1-10</fullName>
        </alternativeName>
        <alternativeName>
            <fullName>Angiotensin I</fullName>
            <shortName>Ang I</shortName>
        </alternativeName>
    </component>
    <component>
        <recommendedName>
            <fullName>Angiotensin-2</fullName>
        </recommendedName>
        <alternativeName>
            <fullName>Angiotensin 1-8</fullName>
        </alternativeName>
        <alternativeName>
            <fullName>Angiotensin II</fullName>
            <shortName>Ang II</shortName>
        </alternativeName>
    </component>
    <component>
        <recommendedName>
            <fullName>Angiotensin-3</fullName>
        </recommendedName>
        <alternativeName>
            <fullName>Angiotensin 2-8</fullName>
        </alternativeName>
        <alternativeName>
            <fullName>Angiotensin III</fullName>
            <shortName>Ang III</shortName>
        </alternativeName>
        <alternativeName>
            <fullName>Des-Asp[1]-angiotensin II</fullName>
        </alternativeName>
    </component>
    <component>
        <recommendedName>
            <fullName>Angiotensin-4</fullName>
        </recommendedName>
        <alternativeName>
            <fullName>Angiotensin 3-8</fullName>
        </alternativeName>
        <alternativeName>
            <fullName>Angiotensin IV</fullName>
            <shortName>Ang IV</shortName>
        </alternativeName>
    </component>
    <component>
        <recommendedName>
            <fullName>Angiotensin 1-9</fullName>
        </recommendedName>
    </component>
    <component>
        <recommendedName>
            <fullName>Angiotensin 1-7</fullName>
        </recommendedName>
    </component>
    <component>
        <recommendedName>
            <fullName>Angiotensin 1-5</fullName>
        </recommendedName>
    </component>
    <component>
        <recommendedName>
            <fullName>Angiotensin 1-4</fullName>
        </recommendedName>
    </component>
</protein>
<accession>Q9GLP6</accession>
<keyword id="KW-1015">Disulfide bond</keyword>
<keyword id="KW-0325">Glycoprotein</keyword>
<keyword id="KW-1185">Reference proteome</keyword>
<keyword id="KW-0964">Secreted</keyword>
<keyword id="KW-0732">Signal</keyword>
<keyword id="KW-0838">Vasoactive</keyword>
<keyword id="KW-0839">Vasoconstrictor</keyword>
<comment type="function">
    <text evidence="3">Essential component of the renin-angiotensin system (RAS), a potent regulator of blood pressure, body fluid and electrolyte homeostasis.</text>
</comment>
<comment type="function">
    <molecule>Angiotensin-2</molecule>
    <text evidence="2 3">Acts directly on vascular smooth muscle as a potent vasoconstrictor, affects cardiac contractility and heart rate through its action on the sympathetic nervous system, and alters renal sodium and water absorption through its ability to stimulate the zona glomerulosa cells of the adrenal cortex to synthesize and secrete aldosterone. Acts by binding to angiotensin receptors AGTR1 and AGTR2. Also binds the DEAR/FBXW7-AS1 receptor.</text>
</comment>
<comment type="function">
    <molecule>Angiotensin-3</molecule>
    <text evidence="3">Stimulates aldosterone release.</text>
</comment>
<comment type="function">
    <molecule>Angiotensin 1-7</molecule>
    <text evidence="4">Is a ligand for the G-protein coupled receptor MAS1. Has vasodilator and antidiuretic effects. Has an antithrombotic effect that involves MAS1-mediated release of nitric oxide from platelets.</text>
</comment>
<comment type="subcellular location">
    <subcellularLocation>
        <location evidence="3">Secreted</location>
    </subcellularLocation>
</comment>
<comment type="PTM">
    <text evidence="3">In response to low blood pressure, the enzyme renin/REN cleaves angiotensinogen to produce angiotensin-1. Angiotensin-1 is a substrate of ACE (angiotensin converting enzyme) that removes a dipeptide to yield the physiologically active peptide angiotensin-2. Angiotensin-1 and angiotensin-2 can be further processed to generate angiotensin-3, angiotensin-4. Angiotensin 1-9 is cleaved from angiotensin-1 by ACE2 and can be further processed by ACE to produce angiotensin 1-7, angiotensin 1-5 and angiotensin 1-4. Angiotensin 1-7 has also been proposed to be cleaved from angiotensin-2 by ACE2 or from angiotensin-1 by MME (neprilysin) (By similarity).</text>
</comment>
<comment type="PTM">
    <text evidence="3">The disulfide bond is labile. Angiotensinogen is present in the circulation in a near 40:60 ratio with the oxidized disulfide-bonded form, which preferentially interacts with receptor-bound renin (By similarity).</text>
</comment>
<comment type="similarity">
    <text evidence="6">Belongs to the serpin family.</text>
</comment>
<comment type="sequence caution" evidence="6">
    <conflict type="erroneous initiation">
        <sequence resource="EMBL-CDS" id="AAG29057"/>
    </conflict>
    <text>Extended N-terminus.</text>
</comment>
<proteinExistence type="evidence at transcript level"/>
<evidence type="ECO:0000250" key="1"/>
<evidence type="ECO:0000250" key="2">
    <source>
        <dbReference type="UniProtKB" id="P01015"/>
    </source>
</evidence>
<evidence type="ECO:0000250" key="3">
    <source>
        <dbReference type="UniProtKB" id="P01019"/>
    </source>
</evidence>
<evidence type="ECO:0000250" key="4">
    <source>
        <dbReference type="UniProtKB" id="P11859"/>
    </source>
</evidence>
<evidence type="ECO:0000255" key="5"/>
<evidence type="ECO:0000305" key="6"/>
<feature type="signal peptide" evidence="5">
    <location>
        <begin position="1"/>
        <end position="24"/>
    </location>
</feature>
<feature type="chain" id="PRO_0000032449" description="Angiotensinogen">
    <location>
        <begin position="25"/>
        <end position="476"/>
    </location>
</feature>
<feature type="peptide" id="PRO_0000032450" description="Angiotensin-1" evidence="3">
    <location>
        <begin position="25"/>
        <end position="34"/>
    </location>
</feature>
<feature type="peptide" id="PRO_0000420649" description="Angiotensin 1-9" evidence="3">
    <location>
        <begin position="25"/>
        <end position="33"/>
    </location>
</feature>
<feature type="peptide" id="PRO_0000032451" description="Angiotensin-2" evidence="3">
    <location>
        <begin position="25"/>
        <end position="32"/>
    </location>
</feature>
<feature type="peptide" id="PRO_0000420650" description="Angiotensin 1-7" evidence="3">
    <location>
        <begin position="25"/>
        <end position="31"/>
    </location>
</feature>
<feature type="peptide" id="PRO_0000420651" description="Angiotensin 1-5" evidence="3">
    <location>
        <begin position="25"/>
        <end position="29"/>
    </location>
</feature>
<feature type="peptide" id="PRO_0000420652" description="Angiotensin 1-4" evidence="3">
    <location>
        <begin position="25"/>
        <end position="28"/>
    </location>
</feature>
<feature type="peptide" id="PRO_0000032452" description="Angiotensin-3" evidence="3">
    <location>
        <begin position="26"/>
        <end position="32"/>
    </location>
</feature>
<feature type="peptide" id="PRO_0000420653" description="Angiotensin-4" evidence="3">
    <location>
        <begin position="27"/>
        <end position="32"/>
    </location>
</feature>
<feature type="glycosylation site" description="N-linked (GlcNAc...) asparagine" evidence="5">
    <location>
        <position position="38"/>
    </location>
</feature>
<feature type="glycosylation site" description="N-linked (GlcNAc...) asparagine" evidence="5">
    <location>
        <position position="161"/>
    </location>
</feature>
<feature type="glycosylation site" description="N-linked (GlcNAc...) asparagine" evidence="5">
    <location>
        <position position="295"/>
    </location>
</feature>
<feature type="glycosylation site" description="N-linked (GlcNAc...) asparagine" evidence="5">
    <location>
        <position position="319"/>
    </location>
</feature>
<feature type="disulfide bond" evidence="1">
    <location>
        <begin position="42"/>
        <end position="162"/>
    </location>
</feature>